<comment type="function">
    <text evidence="2">Secreted effector that partially suppresses the host cell death induced by cell death-inducing proteins.</text>
</comment>
<comment type="subcellular location">
    <subcellularLocation>
        <location evidence="2">Secreted</location>
    </subcellularLocation>
    <subcellularLocation>
        <location evidence="2">Host nucleus</location>
    </subcellularLocation>
    <subcellularLocation>
        <location evidence="2">Host cytoplasm</location>
    </subcellularLocation>
</comment>
<comment type="domain">
    <text evidence="5">The RxLR-dEER motif acts to carry the protein into the host cell cytoplasm through binding to cell surface phosphatidylinositol-3-phosphate.</text>
</comment>
<comment type="similarity">
    <text evidence="4">Belongs to the RxLR effector family.</text>
</comment>
<sequence length="105" mass="11534">MRGAHYVAIVLLVAAGGQTAAGFDQDEPQHAPDNGYMASVDLRNEFLQSRALQASRNPKDDLMFSAGDEERTPLARSNYLKKVTIPDSIINTANAMRMEGKQVRL</sequence>
<gene>
    <name evidence="3" type="primary">RXLR158</name>
</gene>
<keyword id="KW-1035">Host cytoplasm</keyword>
<keyword id="KW-1048">Host nucleus</keyword>
<keyword id="KW-0964">Secreted</keyword>
<keyword id="KW-0732">Signal</keyword>
<keyword id="KW-0843">Virulence</keyword>
<organism>
    <name type="scientific">Plasmopara viticola</name>
    <name type="common">Downy mildew of grapevine</name>
    <name type="synonym">Botrytis viticola</name>
    <dbReference type="NCBI Taxonomy" id="143451"/>
    <lineage>
        <taxon>Eukaryota</taxon>
        <taxon>Sar</taxon>
        <taxon>Stramenopiles</taxon>
        <taxon>Oomycota</taxon>
        <taxon>Peronosporales</taxon>
        <taxon>Peronosporaceae</taxon>
        <taxon>Plasmopara</taxon>
    </lineage>
</organism>
<proteinExistence type="inferred from homology"/>
<reference key="1">
    <citation type="journal article" date="2018" name="Front. Plant Sci.">
        <title>In planta functional analysis and subcellular localization of the oomycete pathogen Plasmopara viticola candidate RXLR effector repertoire.</title>
        <authorList>
            <person name="Liu Y."/>
            <person name="Lan X."/>
            <person name="Song S."/>
            <person name="Yin L."/>
            <person name="Dry I.B."/>
            <person name="Qu J."/>
            <person name="Xiang J."/>
            <person name="Lu J."/>
        </authorList>
    </citation>
    <scope>NUCLEOTIDE SEQUENCE [MRNA]</scope>
    <scope>DOMAIN</scope>
    <scope>FUNCTION</scope>
    <scope>SUBCELLULAR LOCATION</scope>
</reference>
<evidence type="ECO:0000255" key="1"/>
<evidence type="ECO:0000269" key="2">
    <source>
    </source>
</evidence>
<evidence type="ECO:0000303" key="3">
    <source>
    </source>
</evidence>
<evidence type="ECO:0000305" key="4"/>
<evidence type="ECO:0000305" key="5">
    <source>
    </source>
</evidence>
<feature type="signal peptide" evidence="1">
    <location>
        <begin position="1"/>
        <end position="22"/>
    </location>
</feature>
<feature type="chain" id="PRO_0000447979" description="Secreted RxLR effector protein 158">
    <location>
        <begin position="23"/>
        <end position="105"/>
    </location>
</feature>
<feature type="short sequence motif" description="RxLR-dEER" evidence="5">
    <location>
        <begin position="50"/>
        <end position="71"/>
    </location>
</feature>
<protein>
    <recommendedName>
        <fullName evidence="3">Secreted RxLR effector protein 158</fullName>
    </recommendedName>
</protein>
<accession>P0CV69</accession>
<dbReference type="GO" id="GO:0005576">
    <property type="term" value="C:extracellular region"/>
    <property type="evidence" value="ECO:0007669"/>
    <property type="project" value="UniProtKB-SubCell"/>
</dbReference>
<dbReference type="GO" id="GO:0030430">
    <property type="term" value="C:host cell cytoplasm"/>
    <property type="evidence" value="ECO:0007669"/>
    <property type="project" value="UniProtKB-SubCell"/>
</dbReference>
<dbReference type="GO" id="GO:0042025">
    <property type="term" value="C:host cell nucleus"/>
    <property type="evidence" value="ECO:0007669"/>
    <property type="project" value="UniProtKB-SubCell"/>
</dbReference>
<name>RL158_PLAVT</name>